<comment type="similarity">
    <text evidence="1">Belongs to the UPF0235 family.</text>
</comment>
<reference key="1">
    <citation type="journal article" date="2009" name="PLoS Genet.">
        <title>Organised genome dynamics in the Escherichia coli species results in highly diverse adaptive paths.</title>
        <authorList>
            <person name="Touchon M."/>
            <person name="Hoede C."/>
            <person name="Tenaillon O."/>
            <person name="Barbe V."/>
            <person name="Baeriswyl S."/>
            <person name="Bidet P."/>
            <person name="Bingen E."/>
            <person name="Bonacorsi S."/>
            <person name="Bouchier C."/>
            <person name="Bouvet O."/>
            <person name="Calteau A."/>
            <person name="Chiapello H."/>
            <person name="Clermont O."/>
            <person name="Cruveiller S."/>
            <person name="Danchin A."/>
            <person name="Diard M."/>
            <person name="Dossat C."/>
            <person name="Karoui M.E."/>
            <person name="Frapy E."/>
            <person name="Garry L."/>
            <person name="Ghigo J.M."/>
            <person name="Gilles A.M."/>
            <person name="Johnson J."/>
            <person name="Le Bouguenec C."/>
            <person name="Lescat M."/>
            <person name="Mangenot S."/>
            <person name="Martinez-Jehanne V."/>
            <person name="Matic I."/>
            <person name="Nassif X."/>
            <person name="Oztas S."/>
            <person name="Petit M.A."/>
            <person name="Pichon C."/>
            <person name="Rouy Z."/>
            <person name="Ruf C.S."/>
            <person name="Schneider D."/>
            <person name="Tourret J."/>
            <person name="Vacherie B."/>
            <person name="Vallenet D."/>
            <person name="Medigue C."/>
            <person name="Rocha E.P.C."/>
            <person name="Denamur E."/>
        </authorList>
    </citation>
    <scope>NUCLEOTIDE SEQUENCE [LARGE SCALE GENOMIC DNA]</scope>
    <source>
        <strain>IAI39 / ExPEC</strain>
    </source>
</reference>
<dbReference type="EMBL" id="CU928164">
    <property type="protein sequence ID" value="CAR19488.1"/>
    <property type="molecule type" value="Genomic_DNA"/>
</dbReference>
<dbReference type="RefSeq" id="WP_001277222.1">
    <property type="nucleotide sequence ID" value="NC_011750.1"/>
</dbReference>
<dbReference type="RefSeq" id="YP_002409292.1">
    <property type="nucleotide sequence ID" value="NC_011750.1"/>
</dbReference>
<dbReference type="SMR" id="B7NI16"/>
<dbReference type="STRING" id="585057.ECIAI39_3371"/>
<dbReference type="GeneID" id="86861043"/>
<dbReference type="KEGG" id="ect:ECIAI39_3371"/>
<dbReference type="PATRIC" id="fig|585057.6.peg.3499"/>
<dbReference type="HOGENOM" id="CLU_130694_5_0_6"/>
<dbReference type="Proteomes" id="UP000000749">
    <property type="component" value="Chromosome"/>
</dbReference>
<dbReference type="GO" id="GO:0005737">
    <property type="term" value="C:cytoplasm"/>
    <property type="evidence" value="ECO:0007669"/>
    <property type="project" value="TreeGrafter"/>
</dbReference>
<dbReference type="Gene3D" id="3.30.1200.10">
    <property type="entry name" value="YggU-like"/>
    <property type="match status" value="1"/>
</dbReference>
<dbReference type="HAMAP" id="MF_00634">
    <property type="entry name" value="UPF0235"/>
    <property type="match status" value="1"/>
</dbReference>
<dbReference type="InterPro" id="IPR003746">
    <property type="entry name" value="DUF167"/>
</dbReference>
<dbReference type="InterPro" id="IPR036591">
    <property type="entry name" value="YggU-like_sf"/>
</dbReference>
<dbReference type="NCBIfam" id="TIGR00251">
    <property type="entry name" value="DUF167 family protein"/>
    <property type="match status" value="1"/>
</dbReference>
<dbReference type="NCBIfam" id="NF003466">
    <property type="entry name" value="PRK05090.1"/>
    <property type="match status" value="1"/>
</dbReference>
<dbReference type="PANTHER" id="PTHR13420">
    <property type="entry name" value="UPF0235 PROTEIN C15ORF40"/>
    <property type="match status" value="1"/>
</dbReference>
<dbReference type="PANTHER" id="PTHR13420:SF7">
    <property type="entry name" value="UPF0235 PROTEIN C15ORF40"/>
    <property type="match status" value="1"/>
</dbReference>
<dbReference type="Pfam" id="PF02594">
    <property type="entry name" value="DUF167"/>
    <property type="match status" value="1"/>
</dbReference>
<dbReference type="SMART" id="SM01152">
    <property type="entry name" value="DUF167"/>
    <property type="match status" value="1"/>
</dbReference>
<dbReference type="SUPFAM" id="SSF69786">
    <property type="entry name" value="YggU-like"/>
    <property type="match status" value="1"/>
</dbReference>
<name>YGGU_ECO7I</name>
<evidence type="ECO:0000255" key="1">
    <source>
        <dbReference type="HAMAP-Rule" id="MF_00634"/>
    </source>
</evidence>
<gene>
    <name evidence="1" type="primary">yggU</name>
    <name type="ordered locus">ECIAI39_3371</name>
</gene>
<accession>B7NI16</accession>
<protein>
    <recommendedName>
        <fullName evidence="1">UPF0235 protein YggU</fullName>
    </recommendedName>
</protein>
<feature type="chain" id="PRO_1000130680" description="UPF0235 protein YggU">
    <location>
        <begin position="1"/>
        <end position="96"/>
    </location>
</feature>
<organism>
    <name type="scientific">Escherichia coli O7:K1 (strain IAI39 / ExPEC)</name>
    <dbReference type="NCBI Taxonomy" id="585057"/>
    <lineage>
        <taxon>Bacteria</taxon>
        <taxon>Pseudomonadati</taxon>
        <taxon>Pseudomonadota</taxon>
        <taxon>Gammaproteobacteria</taxon>
        <taxon>Enterobacterales</taxon>
        <taxon>Enterobacteriaceae</taxon>
        <taxon>Escherichia</taxon>
    </lineage>
</organism>
<sequence>MSAVTVNDDGLVLRLYIQPKASRDSIVGLHGDEVKVAITAPPVDGQANSHLVKFLGKQFRVAKSQVVIEKGELGRHKQIKIINPQQIPPEIAALIN</sequence>
<proteinExistence type="inferred from homology"/>